<protein>
    <recommendedName>
        <fullName>Inner membrane protein YjiG</fullName>
    </recommendedName>
</protein>
<gene>
    <name type="primary">yjiG</name>
    <name type="ordered locus">b4329</name>
    <name type="ordered locus">JW4292</name>
</gene>
<organism>
    <name type="scientific">Escherichia coli (strain K12)</name>
    <dbReference type="NCBI Taxonomy" id="83333"/>
    <lineage>
        <taxon>Bacteria</taxon>
        <taxon>Pseudomonadati</taxon>
        <taxon>Pseudomonadota</taxon>
        <taxon>Gammaproteobacteria</taxon>
        <taxon>Enterobacterales</taxon>
        <taxon>Enterobacteriaceae</taxon>
        <taxon>Escherichia</taxon>
    </lineage>
</organism>
<dbReference type="EMBL" id="U15029">
    <property type="protein sequence ID" value="AAC43298.1"/>
    <property type="molecule type" value="Genomic_DNA"/>
</dbReference>
<dbReference type="EMBL" id="U14003">
    <property type="protein sequence ID" value="AAA97225.1"/>
    <property type="molecule type" value="Genomic_DNA"/>
</dbReference>
<dbReference type="EMBL" id="U00096">
    <property type="protein sequence ID" value="AAC77285.1"/>
    <property type="molecule type" value="Genomic_DNA"/>
</dbReference>
<dbReference type="EMBL" id="AP009048">
    <property type="protein sequence ID" value="BAE78322.1"/>
    <property type="molecule type" value="Genomic_DNA"/>
</dbReference>
<dbReference type="PIR" id="A55889">
    <property type="entry name" value="A55889"/>
</dbReference>
<dbReference type="RefSeq" id="NP_418749.1">
    <property type="nucleotide sequence ID" value="NC_000913.3"/>
</dbReference>
<dbReference type="RefSeq" id="WP_000211971.1">
    <property type="nucleotide sequence ID" value="NZ_STEB01000025.1"/>
</dbReference>
<dbReference type="BioGRID" id="4261006">
    <property type="interactions" value="5"/>
</dbReference>
<dbReference type="FunCoup" id="P0AEH8">
    <property type="interactions" value="28"/>
</dbReference>
<dbReference type="IntAct" id="P0AEH8">
    <property type="interactions" value="1"/>
</dbReference>
<dbReference type="STRING" id="511145.b4329"/>
<dbReference type="PaxDb" id="511145-b4329"/>
<dbReference type="EnsemblBacteria" id="AAC77285">
    <property type="protein sequence ID" value="AAC77285"/>
    <property type="gene ID" value="b4329"/>
</dbReference>
<dbReference type="GeneID" id="948854"/>
<dbReference type="KEGG" id="ecj:JW4292"/>
<dbReference type="KEGG" id="eco:b4329"/>
<dbReference type="KEGG" id="ecoc:C3026_23400"/>
<dbReference type="PATRIC" id="fig|1411691.4.peg.2360"/>
<dbReference type="EchoBASE" id="EB2456"/>
<dbReference type="eggNOG" id="COG0700">
    <property type="taxonomic scope" value="Bacteria"/>
</dbReference>
<dbReference type="HOGENOM" id="CLU_120911_0_0_6"/>
<dbReference type="InParanoid" id="P0AEH8"/>
<dbReference type="OMA" id="FGICILN"/>
<dbReference type="OrthoDB" id="5339503at2"/>
<dbReference type="PhylomeDB" id="P0AEH8"/>
<dbReference type="BioCyc" id="EcoCyc:G7926-MONOMER"/>
<dbReference type="PRO" id="PR:P0AEH8"/>
<dbReference type="Proteomes" id="UP000000625">
    <property type="component" value="Chromosome"/>
</dbReference>
<dbReference type="GO" id="GO:0005886">
    <property type="term" value="C:plasma membrane"/>
    <property type="evidence" value="ECO:0000314"/>
    <property type="project" value="EcoCyc"/>
</dbReference>
<dbReference type="InterPro" id="IPR011642">
    <property type="entry name" value="Gate_dom"/>
</dbReference>
<dbReference type="InterPro" id="IPR052549">
    <property type="entry name" value="SpmB"/>
</dbReference>
<dbReference type="NCBIfam" id="NF007811">
    <property type="entry name" value="PRK10519.1"/>
    <property type="match status" value="1"/>
</dbReference>
<dbReference type="PANTHER" id="PTHR35793">
    <property type="entry name" value="INNER MEMBRANE PROTEIN YJIG"/>
    <property type="match status" value="1"/>
</dbReference>
<dbReference type="PANTHER" id="PTHR35793:SF2">
    <property type="entry name" value="INNER MEMBRANE PROTEIN YJIG"/>
    <property type="match status" value="1"/>
</dbReference>
<dbReference type="Pfam" id="PF07670">
    <property type="entry name" value="Gate"/>
    <property type="match status" value="1"/>
</dbReference>
<name>YJIG_ECOLI</name>
<sequence length="153" mass="16193">MTTQVRKNVMDMFIDGARRGFTIATTNLLPNVVMAFVIIQALKITGLLDWVGHICEPVMALWGLPGEAATVLLAALMSMGGAVGVAASLATAGALTGHDVTVLLPAMYLMGNPVQNVGRCLGTAEVNAKYYPHIITVCVINALLSIWVMQLIV</sequence>
<reference key="1">
    <citation type="journal article" date="1995" name="J. Biol. Chem.">
        <title>Purification and characterization of an isoaspartyl dipeptidase from Escherichia coli.</title>
        <authorList>
            <person name="Gary J.D."/>
            <person name="Clarke S."/>
        </authorList>
    </citation>
    <scope>NUCLEOTIDE SEQUENCE [GENOMIC DNA]</scope>
    <source>
        <strain>K12 / W3110 / ATCC 27325 / DSM 5911</strain>
    </source>
</reference>
<reference key="2">
    <citation type="journal article" date="1995" name="Nucleic Acids Res.">
        <title>Analysis of the Escherichia coli genome VI: DNA sequence of the region from 92.8 through 100 minutes.</title>
        <authorList>
            <person name="Burland V.D."/>
            <person name="Plunkett G. III"/>
            <person name="Sofia H.J."/>
            <person name="Daniels D.L."/>
            <person name="Blattner F.R."/>
        </authorList>
    </citation>
    <scope>NUCLEOTIDE SEQUENCE [LARGE SCALE GENOMIC DNA]</scope>
    <source>
        <strain>K12 / MG1655 / ATCC 47076</strain>
    </source>
</reference>
<reference key="3">
    <citation type="journal article" date="1997" name="Science">
        <title>The complete genome sequence of Escherichia coli K-12.</title>
        <authorList>
            <person name="Blattner F.R."/>
            <person name="Plunkett G. III"/>
            <person name="Bloch C.A."/>
            <person name="Perna N.T."/>
            <person name="Burland V."/>
            <person name="Riley M."/>
            <person name="Collado-Vides J."/>
            <person name="Glasner J.D."/>
            <person name="Rode C.K."/>
            <person name="Mayhew G.F."/>
            <person name="Gregor J."/>
            <person name="Davis N.W."/>
            <person name="Kirkpatrick H.A."/>
            <person name="Goeden M.A."/>
            <person name="Rose D.J."/>
            <person name="Mau B."/>
            <person name="Shao Y."/>
        </authorList>
    </citation>
    <scope>NUCLEOTIDE SEQUENCE [LARGE SCALE GENOMIC DNA]</scope>
    <source>
        <strain>K12 / MG1655 / ATCC 47076</strain>
    </source>
</reference>
<reference key="4">
    <citation type="journal article" date="2006" name="Mol. Syst. Biol.">
        <title>Highly accurate genome sequences of Escherichia coli K-12 strains MG1655 and W3110.</title>
        <authorList>
            <person name="Hayashi K."/>
            <person name="Morooka N."/>
            <person name="Yamamoto Y."/>
            <person name="Fujita K."/>
            <person name="Isono K."/>
            <person name="Choi S."/>
            <person name="Ohtsubo E."/>
            <person name="Baba T."/>
            <person name="Wanner B.L."/>
            <person name="Mori H."/>
            <person name="Horiuchi T."/>
        </authorList>
    </citation>
    <scope>NUCLEOTIDE SEQUENCE [LARGE SCALE GENOMIC DNA]</scope>
    <source>
        <strain>K12 / W3110 / ATCC 27325 / DSM 5911</strain>
    </source>
</reference>
<reference key="5">
    <citation type="journal article" date="2005" name="Science">
        <title>Global topology analysis of the Escherichia coli inner membrane proteome.</title>
        <authorList>
            <person name="Daley D.O."/>
            <person name="Rapp M."/>
            <person name="Granseth E."/>
            <person name="Melen K."/>
            <person name="Drew D."/>
            <person name="von Heijne G."/>
        </authorList>
    </citation>
    <scope>TOPOLOGY [LARGE SCALE ANALYSIS]</scope>
    <source>
        <strain>K12 / MG1655 / ATCC 47076</strain>
    </source>
</reference>
<feature type="chain" id="PRO_0000201932" description="Inner membrane protein YjiG">
    <location>
        <begin position="1"/>
        <end position="153"/>
    </location>
</feature>
<feature type="topological domain" description="Periplasmic" evidence="1">
    <location>
        <begin position="1"/>
        <end position="31"/>
    </location>
</feature>
<feature type="transmembrane region" description="Helical" evidence="1">
    <location>
        <begin position="32"/>
        <end position="52"/>
    </location>
</feature>
<feature type="topological domain" description="Cytoplasmic" evidence="1">
    <location>
        <begin position="53"/>
        <end position="68"/>
    </location>
</feature>
<feature type="transmembrane region" description="Helical" evidence="1">
    <location>
        <begin position="69"/>
        <end position="89"/>
    </location>
</feature>
<feature type="transmembrane region" description="Helical" evidence="1">
    <location>
        <begin position="90"/>
        <end position="110"/>
    </location>
</feature>
<feature type="topological domain" description="Cytoplasmic" evidence="1">
    <location>
        <begin position="111"/>
        <end position="132"/>
    </location>
</feature>
<feature type="transmembrane region" description="Helical" evidence="1">
    <location>
        <begin position="133"/>
        <end position="153"/>
    </location>
</feature>
<proteinExistence type="evidence at protein level"/>
<evidence type="ECO:0000255" key="1"/>
<evidence type="ECO:0000305" key="2"/>
<accession>P0AEH8</accession>
<accession>P39378</accession>
<accession>Q2M5Y4</accession>
<comment type="subcellular location">
    <subcellularLocation>
        <location>Cell inner membrane</location>
        <topology>Multi-pass membrane protein</topology>
    </subcellularLocation>
</comment>
<comment type="similarity">
    <text evidence="2">Belongs to the SpmB family.</text>
</comment>
<keyword id="KW-0997">Cell inner membrane</keyword>
<keyword id="KW-1003">Cell membrane</keyword>
<keyword id="KW-0472">Membrane</keyword>
<keyword id="KW-1185">Reference proteome</keyword>
<keyword id="KW-0812">Transmembrane</keyword>
<keyword id="KW-1133">Transmembrane helix</keyword>